<comment type="function">
    <text evidence="1">One of the primary rRNA binding proteins, it binds specifically to the 5'-end of 16S ribosomal RNA.</text>
</comment>
<comment type="subunit">
    <text evidence="1">Part of the 30S ribosomal subunit.</text>
</comment>
<comment type="similarity">
    <text evidence="1">Belongs to the universal ribosomal protein uS17 family.</text>
</comment>
<gene>
    <name evidence="1" type="primary">rpsQ</name>
    <name type="ordered locus">APP7_1854</name>
</gene>
<proteinExistence type="inferred from homology"/>
<organism>
    <name type="scientific">Actinobacillus pleuropneumoniae serotype 7 (strain AP76)</name>
    <dbReference type="NCBI Taxonomy" id="537457"/>
    <lineage>
        <taxon>Bacteria</taxon>
        <taxon>Pseudomonadati</taxon>
        <taxon>Pseudomonadota</taxon>
        <taxon>Gammaproteobacteria</taxon>
        <taxon>Pasteurellales</taxon>
        <taxon>Pasteurellaceae</taxon>
        <taxon>Actinobacillus</taxon>
    </lineage>
</organism>
<dbReference type="EMBL" id="CP001091">
    <property type="protein sequence ID" value="ACE62506.1"/>
    <property type="molecule type" value="Genomic_DNA"/>
</dbReference>
<dbReference type="RefSeq" id="WP_005599296.1">
    <property type="nucleotide sequence ID" value="NC_010939.1"/>
</dbReference>
<dbReference type="SMR" id="B3GZ20"/>
<dbReference type="GeneID" id="48600061"/>
<dbReference type="KEGG" id="apa:APP7_1854"/>
<dbReference type="HOGENOM" id="CLU_073626_1_1_6"/>
<dbReference type="Proteomes" id="UP000001226">
    <property type="component" value="Chromosome"/>
</dbReference>
<dbReference type="GO" id="GO:0022627">
    <property type="term" value="C:cytosolic small ribosomal subunit"/>
    <property type="evidence" value="ECO:0007669"/>
    <property type="project" value="TreeGrafter"/>
</dbReference>
<dbReference type="GO" id="GO:0019843">
    <property type="term" value="F:rRNA binding"/>
    <property type="evidence" value="ECO:0007669"/>
    <property type="project" value="UniProtKB-UniRule"/>
</dbReference>
<dbReference type="GO" id="GO:0003735">
    <property type="term" value="F:structural constituent of ribosome"/>
    <property type="evidence" value="ECO:0007669"/>
    <property type="project" value="InterPro"/>
</dbReference>
<dbReference type="GO" id="GO:0006412">
    <property type="term" value="P:translation"/>
    <property type="evidence" value="ECO:0007669"/>
    <property type="project" value="UniProtKB-UniRule"/>
</dbReference>
<dbReference type="CDD" id="cd00364">
    <property type="entry name" value="Ribosomal_uS17"/>
    <property type="match status" value="1"/>
</dbReference>
<dbReference type="FunFam" id="2.40.50.140:FF:000014">
    <property type="entry name" value="30S ribosomal protein S17"/>
    <property type="match status" value="1"/>
</dbReference>
<dbReference type="Gene3D" id="2.40.50.140">
    <property type="entry name" value="Nucleic acid-binding proteins"/>
    <property type="match status" value="1"/>
</dbReference>
<dbReference type="HAMAP" id="MF_01345_B">
    <property type="entry name" value="Ribosomal_uS17_B"/>
    <property type="match status" value="1"/>
</dbReference>
<dbReference type="InterPro" id="IPR012340">
    <property type="entry name" value="NA-bd_OB-fold"/>
</dbReference>
<dbReference type="InterPro" id="IPR000266">
    <property type="entry name" value="Ribosomal_uS17"/>
</dbReference>
<dbReference type="InterPro" id="IPR019984">
    <property type="entry name" value="Ribosomal_uS17_bact/chlr"/>
</dbReference>
<dbReference type="InterPro" id="IPR019979">
    <property type="entry name" value="Ribosomal_uS17_CS"/>
</dbReference>
<dbReference type="NCBIfam" id="NF004123">
    <property type="entry name" value="PRK05610.1"/>
    <property type="match status" value="1"/>
</dbReference>
<dbReference type="NCBIfam" id="TIGR03635">
    <property type="entry name" value="uS17_bact"/>
    <property type="match status" value="1"/>
</dbReference>
<dbReference type="PANTHER" id="PTHR10744">
    <property type="entry name" value="40S RIBOSOMAL PROTEIN S11 FAMILY MEMBER"/>
    <property type="match status" value="1"/>
</dbReference>
<dbReference type="PANTHER" id="PTHR10744:SF1">
    <property type="entry name" value="SMALL RIBOSOMAL SUBUNIT PROTEIN US17M"/>
    <property type="match status" value="1"/>
</dbReference>
<dbReference type="Pfam" id="PF00366">
    <property type="entry name" value="Ribosomal_S17"/>
    <property type="match status" value="1"/>
</dbReference>
<dbReference type="PRINTS" id="PR00973">
    <property type="entry name" value="RIBOSOMALS17"/>
</dbReference>
<dbReference type="SUPFAM" id="SSF50249">
    <property type="entry name" value="Nucleic acid-binding proteins"/>
    <property type="match status" value="1"/>
</dbReference>
<dbReference type="PROSITE" id="PS00056">
    <property type="entry name" value="RIBOSOMAL_S17"/>
    <property type="match status" value="1"/>
</dbReference>
<protein>
    <recommendedName>
        <fullName evidence="1">Small ribosomal subunit protein uS17</fullName>
    </recommendedName>
    <alternativeName>
        <fullName evidence="2">30S ribosomal protein S17</fullName>
    </alternativeName>
</protein>
<keyword id="KW-0687">Ribonucleoprotein</keyword>
<keyword id="KW-0689">Ribosomal protein</keyword>
<keyword id="KW-0694">RNA-binding</keyword>
<keyword id="KW-0699">rRNA-binding</keyword>
<sequence length="84" mass="9570">MTDKIRTVQGKVVSDKMDKSFVVAIERTVKHPLYGKFIRRTTKLHVHDENNEAKLGDVVEIKECRPVSKTKSHTLVRVVEKAVA</sequence>
<name>RS17_ACTP7</name>
<feature type="chain" id="PRO_1000143212" description="Small ribosomal subunit protein uS17">
    <location>
        <begin position="1"/>
        <end position="84"/>
    </location>
</feature>
<evidence type="ECO:0000255" key="1">
    <source>
        <dbReference type="HAMAP-Rule" id="MF_01345"/>
    </source>
</evidence>
<evidence type="ECO:0000305" key="2"/>
<accession>B3GZ20</accession>
<reference key="1">
    <citation type="submission" date="2008-06" db="EMBL/GenBank/DDBJ databases">
        <title>Genome and proteome analysis of A. pleuropneumoniae serotype 7.</title>
        <authorList>
            <person name="Linke B."/>
            <person name="Buettner F."/>
            <person name="Martinez-Arias R."/>
            <person name="Goesmann A."/>
            <person name="Baltes N."/>
            <person name="Tegetmeyer H."/>
            <person name="Singh M."/>
            <person name="Gerlach G.F."/>
        </authorList>
    </citation>
    <scope>NUCLEOTIDE SEQUENCE [LARGE SCALE GENOMIC DNA]</scope>
    <source>
        <strain>AP76</strain>
    </source>
</reference>